<feature type="chain" id="PRO_0000250132" description="3-isopropylmalate dehydrogenase">
    <location>
        <begin position="1"/>
        <end position="356"/>
    </location>
</feature>
<feature type="binding site" evidence="1">
    <location>
        <position position="90"/>
    </location>
    <ligand>
        <name>substrate</name>
    </ligand>
</feature>
<feature type="binding site" evidence="1">
    <location>
        <position position="100"/>
    </location>
    <ligand>
        <name>substrate</name>
    </ligand>
</feature>
<feature type="binding site" evidence="1">
    <location>
        <position position="128"/>
    </location>
    <ligand>
        <name>substrate</name>
    </ligand>
</feature>
<feature type="binding site" evidence="1">
    <location>
        <position position="222"/>
    </location>
    <ligand>
        <name>Mg(2+)</name>
        <dbReference type="ChEBI" id="CHEBI:18420"/>
    </ligand>
</feature>
<feature type="binding site" evidence="1">
    <location>
        <position position="222"/>
    </location>
    <ligand>
        <name>substrate</name>
    </ligand>
</feature>
<feature type="binding site" evidence="1">
    <location>
        <position position="246"/>
    </location>
    <ligand>
        <name>Mg(2+)</name>
        <dbReference type="ChEBI" id="CHEBI:18420"/>
    </ligand>
</feature>
<feature type="binding site" evidence="1">
    <location>
        <position position="250"/>
    </location>
    <ligand>
        <name>Mg(2+)</name>
        <dbReference type="ChEBI" id="CHEBI:18420"/>
    </ligand>
</feature>
<feature type="binding site" evidence="1">
    <location>
        <begin position="280"/>
        <end position="292"/>
    </location>
    <ligand>
        <name>NAD(+)</name>
        <dbReference type="ChEBI" id="CHEBI:57540"/>
    </ligand>
</feature>
<feature type="site" description="Important for catalysis" evidence="1">
    <location>
        <position position="135"/>
    </location>
</feature>
<feature type="site" description="Important for catalysis" evidence="1">
    <location>
        <position position="190"/>
    </location>
</feature>
<accession>Q21XI1</accession>
<reference key="1">
    <citation type="submission" date="2006-02" db="EMBL/GenBank/DDBJ databases">
        <title>Complete sequence of chromosome of Rhodoferax ferrireducens DSM 15236.</title>
        <authorList>
            <person name="Copeland A."/>
            <person name="Lucas S."/>
            <person name="Lapidus A."/>
            <person name="Barry K."/>
            <person name="Detter J.C."/>
            <person name="Glavina del Rio T."/>
            <person name="Hammon N."/>
            <person name="Israni S."/>
            <person name="Pitluck S."/>
            <person name="Brettin T."/>
            <person name="Bruce D."/>
            <person name="Han C."/>
            <person name="Tapia R."/>
            <person name="Gilna P."/>
            <person name="Kiss H."/>
            <person name="Schmutz J."/>
            <person name="Larimer F."/>
            <person name="Land M."/>
            <person name="Kyrpides N."/>
            <person name="Ivanova N."/>
            <person name="Richardson P."/>
        </authorList>
    </citation>
    <scope>NUCLEOTIDE SEQUENCE [LARGE SCALE GENOMIC DNA]</scope>
    <source>
        <strain>ATCC BAA-621 / DSM 15236 / T118</strain>
    </source>
</reference>
<gene>
    <name evidence="1" type="primary">leuB</name>
    <name type="ordered locus">Rfer_1793</name>
</gene>
<comment type="function">
    <text evidence="1">Catalyzes the oxidation of 3-carboxy-2-hydroxy-4-methylpentanoate (3-isopropylmalate) to 3-carboxy-4-methyl-2-oxopentanoate. The product decarboxylates to 4-methyl-2 oxopentanoate.</text>
</comment>
<comment type="catalytic activity">
    <reaction evidence="1">
        <text>(2R,3S)-3-isopropylmalate + NAD(+) = 4-methyl-2-oxopentanoate + CO2 + NADH</text>
        <dbReference type="Rhea" id="RHEA:32271"/>
        <dbReference type="ChEBI" id="CHEBI:16526"/>
        <dbReference type="ChEBI" id="CHEBI:17865"/>
        <dbReference type="ChEBI" id="CHEBI:35121"/>
        <dbReference type="ChEBI" id="CHEBI:57540"/>
        <dbReference type="ChEBI" id="CHEBI:57945"/>
        <dbReference type="EC" id="1.1.1.85"/>
    </reaction>
</comment>
<comment type="cofactor">
    <cofactor evidence="1">
        <name>Mg(2+)</name>
        <dbReference type="ChEBI" id="CHEBI:18420"/>
    </cofactor>
    <cofactor evidence="1">
        <name>Mn(2+)</name>
        <dbReference type="ChEBI" id="CHEBI:29035"/>
    </cofactor>
    <text evidence="1">Binds 1 Mg(2+) or Mn(2+) ion per subunit.</text>
</comment>
<comment type="pathway">
    <text evidence="1">Amino-acid biosynthesis; L-leucine biosynthesis; L-leucine from 3-methyl-2-oxobutanoate: step 3/4.</text>
</comment>
<comment type="subunit">
    <text evidence="1">Homodimer.</text>
</comment>
<comment type="subcellular location">
    <subcellularLocation>
        <location evidence="1">Cytoplasm</location>
    </subcellularLocation>
</comment>
<comment type="similarity">
    <text evidence="1">Belongs to the isocitrate and isopropylmalate dehydrogenases family. LeuB type 1 subfamily.</text>
</comment>
<protein>
    <recommendedName>
        <fullName evidence="1">3-isopropylmalate dehydrogenase</fullName>
        <ecNumber evidence="1">1.1.1.85</ecNumber>
    </recommendedName>
    <alternativeName>
        <fullName evidence="1">3-IPM-DH</fullName>
    </alternativeName>
    <alternativeName>
        <fullName evidence="1">Beta-IPM dehydrogenase</fullName>
        <shortName evidence="1">IMDH</shortName>
    </alternativeName>
</protein>
<organism>
    <name type="scientific">Albidiferax ferrireducens (strain ATCC BAA-621 / DSM 15236 / T118)</name>
    <name type="common">Rhodoferax ferrireducens</name>
    <dbReference type="NCBI Taxonomy" id="338969"/>
    <lineage>
        <taxon>Bacteria</taxon>
        <taxon>Pseudomonadati</taxon>
        <taxon>Pseudomonadota</taxon>
        <taxon>Betaproteobacteria</taxon>
        <taxon>Burkholderiales</taxon>
        <taxon>Comamonadaceae</taxon>
        <taxon>Rhodoferax</taxon>
    </lineage>
</organism>
<keyword id="KW-0028">Amino-acid biosynthesis</keyword>
<keyword id="KW-0100">Branched-chain amino acid biosynthesis</keyword>
<keyword id="KW-0963">Cytoplasm</keyword>
<keyword id="KW-0432">Leucine biosynthesis</keyword>
<keyword id="KW-0460">Magnesium</keyword>
<keyword id="KW-0464">Manganese</keyword>
<keyword id="KW-0479">Metal-binding</keyword>
<keyword id="KW-0520">NAD</keyword>
<keyword id="KW-0560">Oxidoreductase</keyword>
<keyword id="KW-1185">Reference proteome</keyword>
<evidence type="ECO:0000255" key="1">
    <source>
        <dbReference type="HAMAP-Rule" id="MF_01033"/>
    </source>
</evidence>
<dbReference type="EC" id="1.1.1.85" evidence="1"/>
<dbReference type="EMBL" id="CP000267">
    <property type="protein sequence ID" value="ABD69522.1"/>
    <property type="molecule type" value="Genomic_DNA"/>
</dbReference>
<dbReference type="RefSeq" id="WP_011464090.1">
    <property type="nucleotide sequence ID" value="NC_007908.1"/>
</dbReference>
<dbReference type="SMR" id="Q21XI1"/>
<dbReference type="STRING" id="338969.Rfer_1793"/>
<dbReference type="KEGG" id="rfr:Rfer_1793"/>
<dbReference type="eggNOG" id="COG0473">
    <property type="taxonomic scope" value="Bacteria"/>
</dbReference>
<dbReference type="HOGENOM" id="CLU_031953_0_3_4"/>
<dbReference type="OrthoDB" id="5289857at2"/>
<dbReference type="UniPathway" id="UPA00048">
    <property type="reaction ID" value="UER00072"/>
</dbReference>
<dbReference type="Proteomes" id="UP000008332">
    <property type="component" value="Chromosome"/>
</dbReference>
<dbReference type="GO" id="GO:0005829">
    <property type="term" value="C:cytosol"/>
    <property type="evidence" value="ECO:0007669"/>
    <property type="project" value="TreeGrafter"/>
</dbReference>
<dbReference type="GO" id="GO:0003862">
    <property type="term" value="F:3-isopropylmalate dehydrogenase activity"/>
    <property type="evidence" value="ECO:0007669"/>
    <property type="project" value="UniProtKB-UniRule"/>
</dbReference>
<dbReference type="GO" id="GO:0000287">
    <property type="term" value="F:magnesium ion binding"/>
    <property type="evidence" value="ECO:0007669"/>
    <property type="project" value="InterPro"/>
</dbReference>
<dbReference type="GO" id="GO:0051287">
    <property type="term" value="F:NAD binding"/>
    <property type="evidence" value="ECO:0007669"/>
    <property type="project" value="InterPro"/>
</dbReference>
<dbReference type="GO" id="GO:0009098">
    <property type="term" value="P:L-leucine biosynthetic process"/>
    <property type="evidence" value="ECO:0007669"/>
    <property type="project" value="UniProtKB-UniRule"/>
</dbReference>
<dbReference type="FunFam" id="3.40.718.10:FF:000028">
    <property type="entry name" value="3-isopropylmalate dehydrogenase"/>
    <property type="match status" value="1"/>
</dbReference>
<dbReference type="Gene3D" id="3.40.718.10">
    <property type="entry name" value="Isopropylmalate Dehydrogenase"/>
    <property type="match status" value="1"/>
</dbReference>
<dbReference type="HAMAP" id="MF_01033">
    <property type="entry name" value="LeuB_type1"/>
    <property type="match status" value="1"/>
</dbReference>
<dbReference type="InterPro" id="IPR019818">
    <property type="entry name" value="IsoCit/isopropylmalate_DH_CS"/>
</dbReference>
<dbReference type="InterPro" id="IPR024084">
    <property type="entry name" value="IsoPropMal-DH-like_dom"/>
</dbReference>
<dbReference type="InterPro" id="IPR004429">
    <property type="entry name" value="Isopropylmalate_DH"/>
</dbReference>
<dbReference type="NCBIfam" id="TIGR00169">
    <property type="entry name" value="leuB"/>
    <property type="match status" value="1"/>
</dbReference>
<dbReference type="PANTHER" id="PTHR42979">
    <property type="entry name" value="3-ISOPROPYLMALATE DEHYDROGENASE"/>
    <property type="match status" value="1"/>
</dbReference>
<dbReference type="PANTHER" id="PTHR42979:SF1">
    <property type="entry name" value="3-ISOPROPYLMALATE DEHYDROGENASE"/>
    <property type="match status" value="1"/>
</dbReference>
<dbReference type="Pfam" id="PF00180">
    <property type="entry name" value="Iso_dh"/>
    <property type="match status" value="1"/>
</dbReference>
<dbReference type="SMART" id="SM01329">
    <property type="entry name" value="Iso_dh"/>
    <property type="match status" value="1"/>
</dbReference>
<dbReference type="SUPFAM" id="SSF53659">
    <property type="entry name" value="Isocitrate/Isopropylmalate dehydrogenase-like"/>
    <property type="match status" value="1"/>
</dbReference>
<dbReference type="PROSITE" id="PS00470">
    <property type="entry name" value="IDH_IMDH"/>
    <property type="match status" value="1"/>
</dbReference>
<name>LEU3_ALBFT</name>
<proteinExistence type="inferred from homology"/>
<sequence length="356" mass="38457">MKIAVLPGDGIGTEIVAEAVKVLNALDLKLEMETALVGGAAYEAFGHPLPDATLKLAKEADAVLFGAVGDWKYDKLDRPLRPEQAILGLRKNLGLFANFRPAICYEQLVDASSLKPELIAGLDILIIRELTGDIYFGQPRGRRTATDGHFPGAEEAFDTMRYSRPEIERIAHVAFQAARKRSKRVTSVDKANVLETFQFWRDVLTEVGQQYPDVELDHMYVDNAAMQLVRAPKKFDVVVTGNLFGDILSDEAAMLTGSIGMLPSASLNASSQGLYEPSHGSAPDIAGKGVANPLATILSAAMMLRFSLNQEVAAQRIEAAVKDVLVQGLRTADIFSTGTTRVSTVEMGAAVVKALK</sequence>